<evidence type="ECO:0000250" key="1">
    <source>
        <dbReference type="UniProtKB" id="Q9NSG2"/>
    </source>
</evidence>
<evidence type="ECO:0000256" key="2">
    <source>
        <dbReference type="SAM" id="MobiDB-lite"/>
    </source>
</evidence>
<evidence type="ECO:0000305" key="3"/>
<protein>
    <recommendedName>
        <fullName evidence="1">FIGNL1-interacting regulator of recombination and mitosis</fullName>
    </recommendedName>
    <alternativeName>
        <fullName evidence="1">FIDGETIN-like-1 interacting protein</fullName>
        <shortName>FLIP</shortName>
    </alternativeName>
    <alternativeName>
        <fullName evidence="1">POLO1-associating protein</fullName>
    </alternativeName>
</protein>
<feature type="chain" id="PRO_0000279464" description="FIGNL1-interacting regulator of recombination and mitosis">
    <location>
        <begin position="1"/>
        <end position="911"/>
    </location>
</feature>
<feature type="region of interest" description="Disordered" evidence="2">
    <location>
        <begin position="830"/>
        <end position="853"/>
    </location>
</feature>
<feature type="compositionally biased region" description="Basic and acidic residues" evidence="2">
    <location>
        <begin position="844"/>
        <end position="853"/>
    </location>
</feature>
<feature type="sequence conflict" description="In Ref. 2; AAH95206." evidence="3" ref="2">
    <original>C</original>
    <variation>Y</variation>
    <location>
        <position position="396"/>
    </location>
</feature>
<feature type="sequence conflict" description="In Ref. 2; AAH95206." evidence="3" ref="2">
    <original>L</original>
    <variation>I</variation>
    <location>
        <position position="537"/>
    </location>
</feature>
<reference key="1">
    <citation type="journal article" date="2013" name="Nature">
        <title>The zebrafish reference genome sequence and its relationship to the human genome.</title>
        <authorList>
            <person name="Howe K."/>
            <person name="Clark M.D."/>
            <person name="Torroja C.F."/>
            <person name="Torrance J."/>
            <person name="Berthelot C."/>
            <person name="Muffato M."/>
            <person name="Collins J.E."/>
            <person name="Humphray S."/>
            <person name="McLaren K."/>
            <person name="Matthews L."/>
            <person name="McLaren S."/>
            <person name="Sealy I."/>
            <person name="Caccamo M."/>
            <person name="Churcher C."/>
            <person name="Scott C."/>
            <person name="Barrett J.C."/>
            <person name="Koch R."/>
            <person name="Rauch G.J."/>
            <person name="White S."/>
            <person name="Chow W."/>
            <person name="Kilian B."/>
            <person name="Quintais L.T."/>
            <person name="Guerra-Assuncao J.A."/>
            <person name="Zhou Y."/>
            <person name="Gu Y."/>
            <person name="Yen J."/>
            <person name="Vogel J.H."/>
            <person name="Eyre T."/>
            <person name="Redmond S."/>
            <person name="Banerjee R."/>
            <person name="Chi J."/>
            <person name="Fu B."/>
            <person name="Langley E."/>
            <person name="Maguire S.F."/>
            <person name="Laird G.K."/>
            <person name="Lloyd D."/>
            <person name="Kenyon E."/>
            <person name="Donaldson S."/>
            <person name="Sehra H."/>
            <person name="Almeida-King J."/>
            <person name="Loveland J."/>
            <person name="Trevanion S."/>
            <person name="Jones M."/>
            <person name="Quail M."/>
            <person name="Willey D."/>
            <person name="Hunt A."/>
            <person name="Burton J."/>
            <person name="Sims S."/>
            <person name="McLay K."/>
            <person name="Plumb B."/>
            <person name="Davis J."/>
            <person name="Clee C."/>
            <person name="Oliver K."/>
            <person name="Clark R."/>
            <person name="Riddle C."/>
            <person name="Elliot D."/>
            <person name="Threadgold G."/>
            <person name="Harden G."/>
            <person name="Ware D."/>
            <person name="Begum S."/>
            <person name="Mortimore B."/>
            <person name="Kerry G."/>
            <person name="Heath P."/>
            <person name="Phillimore B."/>
            <person name="Tracey A."/>
            <person name="Corby N."/>
            <person name="Dunn M."/>
            <person name="Johnson C."/>
            <person name="Wood J."/>
            <person name="Clark S."/>
            <person name="Pelan S."/>
            <person name="Griffiths G."/>
            <person name="Smith M."/>
            <person name="Glithero R."/>
            <person name="Howden P."/>
            <person name="Barker N."/>
            <person name="Lloyd C."/>
            <person name="Stevens C."/>
            <person name="Harley J."/>
            <person name="Holt K."/>
            <person name="Panagiotidis G."/>
            <person name="Lovell J."/>
            <person name="Beasley H."/>
            <person name="Henderson C."/>
            <person name="Gordon D."/>
            <person name="Auger K."/>
            <person name="Wright D."/>
            <person name="Collins J."/>
            <person name="Raisen C."/>
            <person name="Dyer L."/>
            <person name="Leung K."/>
            <person name="Robertson L."/>
            <person name="Ambridge K."/>
            <person name="Leongamornlert D."/>
            <person name="McGuire S."/>
            <person name="Gilderthorp R."/>
            <person name="Griffiths C."/>
            <person name="Manthravadi D."/>
            <person name="Nichol S."/>
            <person name="Barker G."/>
            <person name="Whitehead S."/>
            <person name="Kay M."/>
            <person name="Brown J."/>
            <person name="Murnane C."/>
            <person name="Gray E."/>
            <person name="Humphries M."/>
            <person name="Sycamore N."/>
            <person name="Barker D."/>
            <person name="Saunders D."/>
            <person name="Wallis J."/>
            <person name="Babbage A."/>
            <person name="Hammond S."/>
            <person name="Mashreghi-Mohammadi M."/>
            <person name="Barr L."/>
            <person name="Martin S."/>
            <person name="Wray P."/>
            <person name="Ellington A."/>
            <person name="Matthews N."/>
            <person name="Ellwood M."/>
            <person name="Woodmansey R."/>
            <person name="Clark G."/>
            <person name="Cooper J."/>
            <person name="Tromans A."/>
            <person name="Grafham D."/>
            <person name="Skuce C."/>
            <person name="Pandian R."/>
            <person name="Andrews R."/>
            <person name="Harrison E."/>
            <person name="Kimberley A."/>
            <person name="Garnett J."/>
            <person name="Fosker N."/>
            <person name="Hall R."/>
            <person name="Garner P."/>
            <person name="Kelly D."/>
            <person name="Bird C."/>
            <person name="Palmer S."/>
            <person name="Gehring I."/>
            <person name="Berger A."/>
            <person name="Dooley C.M."/>
            <person name="Ersan-Urun Z."/>
            <person name="Eser C."/>
            <person name="Geiger H."/>
            <person name="Geisler M."/>
            <person name="Karotki L."/>
            <person name="Kirn A."/>
            <person name="Konantz J."/>
            <person name="Konantz M."/>
            <person name="Oberlander M."/>
            <person name="Rudolph-Geiger S."/>
            <person name="Teucke M."/>
            <person name="Lanz C."/>
            <person name="Raddatz G."/>
            <person name="Osoegawa K."/>
            <person name="Zhu B."/>
            <person name="Rapp A."/>
            <person name="Widaa S."/>
            <person name="Langford C."/>
            <person name="Yang F."/>
            <person name="Schuster S.C."/>
            <person name="Carter N.P."/>
            <person name="Harrow J."/>
            <person name="Ning Z."/>
            <person name="Herrero J."/>
            <person name="Searle S.M."/>
            <person name="Enright A."/>
            <person name="Geisler R."/>
            <person name="Plasterk R.H."/>
            <person name="Lee C."/>
            <person name="Westerfield M."/>
            <person name="de Jong P.J."/>
            <person name="Zon L.I."/>
            <person name="Postlethwait J.H."/>
            <person name="Nusslein-Volhard C."/>
            <person name="Hubbard T.J."/>
            <person name="Roest Crollius H."/>
            <person name="Rogers J."/>
            <person name="Stemple D.L."/>
        </authorList>
    </citation>
    <scope>NUCLEOTIDE SEQUENCE [LARGE SCALE GENOMIC DNA]</scope>
    <source>
        <strain>Tuebingen</strain>
    </source>
</reference>
<reference key="2">
    <citation type="submission" date="2005-05" db="EMBL/GenBank/DDBJ databases">
        <authorList>
            <consortium name="NIH - Zebrafish Gene Collection (ZGC) project"/>
        </authorList>
    </citation>
    <scope>NUCLEOTIDE SEQUENCE [LARGE SCALE MRNA]</scope>
    <source>
        <tissue>Ovary</tissue>
    </source>
</reference>
<dbReference type="EMBL" id="CR318619">
    <property type="protein sequence ID" value="CAH69086.1"/>
    <property type="molecule type" value="Genomic_DNA"/>
</dbReference>
<dbReference type="EMBL" id="BX323056">
    <property type="protein sequence ID" value="CAH69086.1"/>
    <property type="status" value="JOINED"/>
    <property type="molecule type" value="Genomic_DNA"/>
</dbReference>
<dbReference type="EMBL" id="BX323056">
    <property type="protein sequence ID" value="CAI21283.1"/>
    <property type="molecule type" value="Genomic_DNA"/>
</dbReference>
<dbReference type="EMBL" id="CR318619">
    <property type="protein sequence ID" value="CAI21283.1"/>
    <property type="status" value="JOINED"/>
    <property type="molecule type" value="Genomic_DNA"/>
</dbReference>
<dbReference type="EMBL" id="BC095206">
    <property type="protein sequence ID" value="AAH95206.1"/>
    <property type="molecule type" value="mRNA"/>
</dbReference>
<dbReference type="RefSeq" id="NP_001018495.1">
    <property type="nucleotide sequence ID" value="NM_001020659.2"/>
</dbReference>
<dbReference type="RefSeq" id="XP_005160750.1">
    <property type="nucleotide sequence ID" value="XM_005160693.5"/>
</dbReference>
<dbReference type="FunCoup" id="Q5TYP4">
    <property type="interactions" value="1103"/>
</dbReference>
<dbReference type="STRING" id="7955.ENSDARP00000061728"/>
<dbReference type="PaxDb" id="7955-ENSDARP00000061728"/>
<dbReference type="Ensembl" id="ENSDART00000061729">
    <property type="protein sequence ID" value="ENSDARP00000061728"/>
    <property type="gene ID" value="ENSDARG00000042120"/>
</dbReference>
<dbReference type="GeneID" id="553598"/>
<dbReference type="KEGG" id="dre:553598"/>
<dbReference type="AGR" id="ZFIN:ZDB-GENE-030131-3554"/>
<dbReference type="CTD" id="55732"/>
<dbReference type="ZFIN" id="ZDB-GENE-030131-3554">
    <property type="gene designation" value="firrm"/>
</dbReference>
<dbReference type="eggNOG" id="ENOG502QQPV">
    <property type="taxonomic scope" value="Eukaryota"/>
</dbReference>
<dbReference type="HOGENOM" id="CLU_335441_0_0_1"/>
<dbReference type="InParanoid" id="Q5TYP4"/>
<dbReference type="OMA" id="PCVQQTF"/>
<dbReference type="OrthoDB" id="6088000at2759"/>
<dbReference type="PhylomeDB" id="Q5TYP4"/>
<dbReference type="TreeFam" id="TF328571"/>
<dbReference type="Reactome" id="R-DRE-2500257">
    <property type="pathway name" value="Resolution of Sister Chromatid Cohesion"/>
</dbReference>
<dbReference type="Reactome" id="R-DRE-5693568">
    <property type="pathway name" value="Resolution of D-loop Structures through Holliday Junction Intermediates"/>
</dbReference>
<dbReference type="Reactome" id="R-DRE-912446">
    <property type="pathway name" value="Meiotic recombination"/>
</dbReference>
<dbReference type="PRO" id="PR:Q5TYP4"/>
<dbReference type="Proteomes" id="UP000000437">
    <property type="component" value="Chromosome 20"/>
</dbReference>
<dbReference type="Bgee" id="ENSDARG00000042120">
    <property type="expression patterns" value="Expressed in mature ovarian follicle and 26 other cell types or tissues"/>
</dbReference>
<dbReference type="GO" id="GO:0000775">
    <property type="term" value="C:chromosome, centromeric region"/>
    <property type="evidence" value="ECO:0000250"/>
    <property type="project" value="UniProtKB"/>
</dbReference>
<dbReference type="GO" id="GO:0005737">
    <property type="term" value="C:cytoplasm"/>
    <property type="evidence" value="ECO:0007669"/>
    <property type="project" value="UniProtKB-KW"/>
</dbReference>
<dbReference type="GO" id="GO:0000776">
    <property type="term" value="C:kinetochore"/>
    <property type="evidence" value="ECO:0000250"/>
    <property type="project" value="UniProtKB"/>
</dbReference>
<dbReference type="GO" id="GO:0030496">
    <property type="term" value="C:midbody"/>
    <property type="evidence" value="ECO:0000250"/>
    <property type="project" value="UniProtKB"/>
</dbReference>
<dbReference type="GO" id="GO:0005634">
    <property type="term" value="C:nucleus"/>
    <property type="evidence" value="ECO:0000250"/>
    <property type="project" value="UniProtKB"/>
</dbReference>
<dbReference type="GO" id="GO:0051233">
    <property type="term" value="C:spindle midzone"/>
    <property type="evidence" value="ECO:0000250"/>
    <property type="project" value="UniProtKB"/>
</dbReference>
<dbReference type="GO" id="GO:0019901">
    <property type="term" value="F:protein kinase binding"/>
    <property type="evidence" value="ECO:0000250"/>
    <property type="project" value="UniProtKB"/>
</dbReference>
<dbReference type="GO" id="GO:0036297">
    <property type="term" value="P:interstrand cross-link repair"/>
    <property type="evidence" value="ECO:0000250"/>
    <property type="project" value="UniProtKB"/>
</dbReference>
<dbReference type="GO" id="GO:0000278">
    <property type="term" value="P:mitotic cell cycle"/>
    <property type="evidence" value="ECO:0000250"/>
    <property type="project" value="UniProtKB"/>
</dbReference>
<dbReference type="InterPro" id="IPR016024">
    <property type="entry name" value="ARM-type_fold"/>
</dbReference>
<dbReference type="InterPro" id="IPR027902">
    <property type="entry name" value="DUF4487"/>
</dbReference>
<dbReference type="PANTHER" id="PTHR16071">
    <property type="entry name" value="CHROMOSOME 1 OPEN READING FRAME 112"/>
    <property type="match status" value="1"/>
</dbReference>
<dbReference type="PANTHER" id="PTHR16071:SF2">
    <property type="entry name" value="FIGNL1-INTERACTING REGULATOR OF RECOMBINATION AND MITOSIS"/>
    <property type="match status" value="1"/>
</dbReference>
<dbReference type="Pfam" id="PF14868">
    <property type="entry name" value="DUF4487"/>
    <property type="match status" value="1"/>
</dbReference>
<dbReference type="SUPFAM" id="SSF48371">
    <property type="entry name" value="ARM repeat"/>
    <property type="match status" value="1"/>
</dbReference>
<organism>
    <name type="scientific">Danio rerio</name>
    <name type="common">Zebrafish</name>
    <name type="synonym">Brachydanio rerio</name>
    <dbReference type="NCBI Taxonomy" id="7955"/>
    <lineage>
        <taxon>Eukaryota</taxon>
        <taxon>Metazoa</taxon>
        <taxon>Chordata</taxon>
        <taxon>Craniata</taxon>
        <taxon>Vertebrata</taxon>
        <taxon>Euteleostomi</taxon>
        <taxon>Actinopterygii</taxon>
        <taxon>Neopterygii</taxon>
        <taxon>Teleostei</taxon>
        <taxon>Ostariophysi</taxon>
        <taxon>Cypriniformes</taxon>
        <taxon>Danionidae</taxon>
        <taxon>Danioninae</taxon>
        <taxon>Danio</taxon>
    </lineage>
</organism>
<sequence length="911" mass="103015">MSQVTLLDEVSQWNQETCQQELKTVLPKLVAMHHDTDSWEEHTNILQIITSRFLPHLSLSDLETGCFSTALPKVVKVFASLLEEISKQIGGLSSQNTELQLFLRKILKTMVQTLECLSGCVRHVCSIEESVSFSNIRSLPSCILGVLKDTFQHCKDSEVMYSGRLSLVGDLLQGLFKEAYSLQKGLMELLDKINFEDTASEEEISDIVTVIHSLLDICLIISRLDIALHANTWKFIIKQSIKYQSLVEDRLHHTDISFALCEDLCRSVENCLELAQQIQQAGLQEAVHSPEYKLFQKATKMCRFFANTLVHYTKEFKVFLSKSCSRFHQLYLQINSKFLPSLCAPSVPPTLSEELRVAVLVPMDAMLTQMMSFQPFAESVLNPDHQSSAKLFLPQCLLLVNVMGKLSSQPEEALRLWSDGSQFPEETPRWSVFEAVFQSFRLCVLERLVPVCLPGVMLRGQAQGTVSLHQHVCVHMCACVAVLPAQHFPPLERSLLAAVLQADTQTALLATDVWCFLARYGTAELCYHHVVLIAHLLRACPAGGYQLFHLALVLRRLLFLMTPKHQVEFVERFPLSQEENLCVWRHTLLKCLCVEARVRVEEQVLDRATVVLEEWQNSGCRLGEIPRLNRILDCVLLVVGGSGTQNECVESLVKIISQLWSHMRSSQVQVHVTLQCTVKLLLSLSAVLIKSLEPHIILQAVSCLSGLSIHQCPDDLLLAALEFLASLGQIFIPPNIQGQVLPQISSLFNGFLTRPSWLILHHVLEAFGCFAEITNHEEVISQTLKTEEVKSKVLNFLSKTVSRQESEETRLERLKEWKCVIEKHCQQMESEKSQPAQTPLTEEPCAKRARQETKAEEEYERYLQTAEGALKALQAIERSEHSPSPPQWVRARLQLLQTLITQINTTTEEQS</sequence>
<accession>Q5TYP4</accession>
<accession>Q503S2</accession>
<comment type="function">
    <text evidence="1">May play a role in chromosome segregation.</text>
</comment>
<comment type="subcellular location">
    <subcellularLocation>
        <location evidence="1">Chromosome</location>
        <location evidence="1">Centromere</location>
        <location evidence="1">Kinetochore</location>
    </subcellularLocation>
    <subcellularLocation>
        <location evidence="1">Nucleus</location>
    </subcellularLocation>
    <subcellularLocation>
        <location evidence="1">Chromosome</location>
        <location evidence="1">Centromere</location>
    </subcellularLocation>
    <subcellularLocation>
        <location evidence="1">Midbody</location>
    </subcellularLocation>
    <subcellularLocation>
        <location evidence="1">Cytoplasm</location>
        <location evidence="1">Cytoskeleton</location>
        <location evidence="1">Spindle</location>
    </subcellularLocation>
    <text evidence="1">Exhibits cell-cycle-dependent distribution during mitosis.</text>
</comment>
<name>FIRRM_DANRE</name>
<proteinExistence type="evidence at transcript level"/>
<gene>
    <name evidence="1" type="primary">firrm</name>
    <name type="ORF">si:dkey-97o5.1</name>
    <name type="ORF">zgc:110228</name>
</gene>
<keyword id="KW-0137">Centromere</keyword>
<keyword id="KW-0158">Chromosome</keyword>
<keyword id="KW-0963">Cytoplasm</keyword>
<keyword id="KW-0206">Cytoskeleton</keyword>
<keyword id="KW-0995">Kinetochore</keyword>
<keyword id="KW-0539">Nucleus</keyword>
<keyword id="KW-1185">Reference proteome</keyword>